<feature type="initiator methionine" description="Removed" evidence="2 3">
    <location>
        <position position="1"/>
    </location>
</feature>
<feature type="chain" id="PRO_0000160036" description="Superoxide dismutase [Fe]">
    <location>
        <begin position="2"/>
        <end position="170" status="greater than"/>
    </location>
</feature>
<feature type="binding site" evidence="1">
    <location>
        <position position="27"/>
    </location>
    <ligand>
        <name>Fe cation</name>
        <dbReference type="ChEBI" id="CHEBI:24875"/>
    </ligand>
</feature>
<feature type="binding site" evidence="1">
    <location>
        <position position="81"/>
    </location>
    <ligand>
        <name>Fe cation</name>
        <dbReference type="ChEBI" id="CHEBI:24875"/>
    </ligand>
</feature>
<feature type="binding site" evidence="1">
    <location>
        <position position="163"/>
    </location>
    <ligand>
        <name>Fe cation</name>
        <dbReference type="ChEBI" id="CHEBI:24875"/>
    </ligand>
</feature>
<feature type="binding site" evidence="1">
    <location>
        <position position="167"/>
    </location>
    <ligand>
        <name>Fe cation</name>
        <dbReference type="ChEBI" id="CHEBI:24875"/>
    </ligand>
</feature>
<feature type="non-terminal residue">
    <location>
        <position position="170"/>
    </location>
</feature>
<dbReference type="EC" id="1.15.1.1"/>
<dbReference type="PIR" id="PN0615">
    <property type="entry name" value="PN0615"/>
</dbReference>
<dbReference type="GO" id="GO:0005737">
    <property type="term" value="C:cytoplasm"/>
    <property type="evidence" value="ECO:0007669"/>
    <property type="project" value="TreeGrafter"/>
</dbReference>
<dbReference type="GO" id="GO:0046872">
    <property type="term" value="F:metal ion binding"/>
    <property type="evidence" value="ECO:0007669"/>
    <property type="project" value="UniProtKB-KW"/>
</dbReference>
<dbReference type="GO" id="GO:0004784">
    <property type="term" value="F:superoxide dismutase activity"/>
    <property type="evidence" value="ECO:0007669"/>
    <property type="project" value="UniProtKB-EC"/>
</dbReference>
<dbReference type="FunFam" id="1.10.287.990:FF:000001">
    <property type="entry name" value="Superoxide dismutase"/>
    <property type="match status" value="1"/>
</dbReference>
<dbReference type="Gene3D" id="1.10.287.990">
    <property type="entry name" value="Fe,Mn superoxide dismutase (SOD) domain"/>
    <property type="match status" value="1"/>
</dbReference>
<dbReference type="Gene3D" id="3.55.40.20">
    <property type="entry name" value="Iron/manganese superoxide dismutase, C-terminal domain"/>
    <property type="match status" value="1"/>
</dbReference>
<dbReference type="InterPro" id="IPR001189">
    <property type="entry name" value="Mn/Fe_SOD"/>
</dbReference>
<dbReference type="InterPro" id="IPR019833">
    <property type="entry name" value="Mn/Fe_SOD_BS"/>
</dbReference>
<dbReference type="InterPro" id="IPR019832">
    <property type="entry name" value="Mn/Fe_SOD_C"/>
</dbReference>
<dbReference type="InterPro" id="IPR019831">
    <property type="entry name" value="Mn/Fe_SOD_N"/>
</dbReference>
<dbReference type="InterPro" id="IPR036324">
    <property type="entry name" value="Mn/Fe_SOD_N_sf"/>
</dbReference>
<dbReference type="InterPro" id="IPR036314">
    <property type="entry name" value="SOD_C_sf"/>
</dbReference>
<dbReference type="PANTHER" id="PTHR43595">
    <property type="entry name" value="37S RIBOSOMAL PROTEIN S26, MITOCHONDRIAL"/>
    <property type="match status" value="1"/>
</dbReference>
<dbReference type="PANTHER" id="PTHR43595:SF2">
    <property type="entry name" value="SMALL RIBOSOMAL SUBUNIT PROTEIN MS42"/>
    <property type="match status" value="1"/>
</dbReference>
<dbReference type="Pfam" id="PF02777">
    <property type="entry name" value="Sod_Fe_C"/>
    <property type="match status" value="1"/>
</dbReference>
<dbReference type="Pfam" id="PF00081">
    <property type="entry name" value="Sod_Fe_N"/>
    <property type="match status" value="1"/>
</dbReference>
<dbReference type="PIRSF" id="PIRSF000349">
    <property type="entry name" value="SODismutase"/>
    <property type="match status" value="1"/>
</dbReference>
<dbReference type="PRINTS" id="PR01703">
    <property type="entry name" value="MNSODISMTASE"/>
</dbReference>
<dbReference type="SUPFAM" id="SSF54719">
    <property type="entry name" value="Fe,Mn superoxide dismutase (SOD), C-terminal domain"/>
    <property type="match status" value="1"/>
</dbReference>
<dbReference type="SUPFAM" id="SSF46609">
    <property type="entry name" value="Fe,Mn superoxide dismutase (SOD), N-terminal domain"/>
    <property type="match status" value="1"/>
</dbReference>
<dbReference type="PROSITE" id="PS00088">
    <property type="entry name" value="SOD_MN"/>
    <property type="match status" value="1"/>
</dbReference>
<keyword id="KW-0903">Direct protein sequencing</keyword>
<keyword id="KW-0408">Iron</keyword>
<keyword id="KW-0479">Metal-binding</keyword>
<keyword id="KW-0560">Oxidoreductase</keyword>
<protein>
    <recommendedName>
        <fullName>Superoxide dismutase [Fe]</fullName>
        <ecNumber>1.15.1.1</ecNumber>
    </recommendedName>
</protein>
<proteinExistence type="evidence at protein level"/>
<comment type="function">
    <text>Destroys superoxide anion radicals which are normally produced within the cells and which are toxic to biological systems.</text>
</comment>
<comment type="catalytic activity">
    <reaction>
        <text>2 superoxide + 2 H(+) = H2O2 + O2</text>
        <dbReference type="Rhea" id="RHEA:20696"/>
        <dbReference type="ChEBI" id="CHEBI:15378"/>
        <dbReference type="ChEBI" id="CHEBI:15379"/>
        <dbReference type="ChEBI" id="CHEBI:16240"/>
        <dbReference type="ChEBI" id="CHEBI:18421"/>
        <dbReference type="EC" id="1.15.1.1"/>
    </reaction>
</comment>
<comment type="cofactor">
    <cofactor evidence="1">
        <name>Fe cation</name>
        <dbReference type="ChEBI" id="CHEBI:24875"/>
    </cofactor>
    <text evidence="1">Binds 1 Fe cation per subunit.</text>
</comment>
<comment type="subunit">
    <text evidence="2">Homodimer.</text>
</comment>
<comment type="similarity">
    <text evidence="4">Belongs to the iron/manganese superoxide dismutase family.</text>
</comment>
<accession>P22799</accession>
<name>SODM_RAOPL</name>
<organism>
    <name type="scientific">Raoultella planticola</name>
    <name type="common">Klebsiella planticola</name>
    <dbReference type="NCBI Taxonomy" id="575"/>
    <lineage>
        <taxon>Bacteria</taxon>
        <taxon>Pseudomonadati</taxon>
        <taxon>Pseudomonadota</taxon>
        <taxon>Gammaproteobacteria</taxon>
        <taxon>Enterobacterales</taxon>
        <taxon>Enterobacteriaceae</taxon>
        <taxon>Klebsiella/Raoultella group</taxon>
        <taxon>Raoultella</taxon>
    </lineage>
</organism>
<gene>
    <name type="primary">sodA</name>
</gene>
<reference key="1">
    <citation type="journal article" date="1993" name="Biosci. Biotechnol. Biochem.">
        <title>Direct sequencing of superoxide dismutase genes from two bacterial strains amplified by polymerase chain reaction.</title>
        <authorList>
            <person name="Lee S.O."/>
            <person name="Kim S.W."/>
            <person name="Uno I."/>
            <person name="Lee T.H."/>
        </authorList>
    </citation>
    <scope>NUCLEOTIDE SEQUENCE [GENOMIC DNA]</scope>
    <scope>PROTEIN SEQUENCE OF 2-26</scope>
</reference>
<reference key="2">
    <citation type="journal article" date="1991" name="Agric. Biol. Chem.">
        <title>Purification and characterization of superoxide dismutase from Aerobacter aerogenes.</title>
        <authorList>
            <person name="Kim S.W."/>
            <person name="Lee S.O."/>
            <person name="Lee T.H."/>
        </authorList>
    </citation>
    <scope>PROTEIN SEQUENCE OF 2-16</scope>
    <scope>SUBUNIT</scope>
    <scope>CHARACTERIZATION</scope>
    <source>
        <strain>ATCC 8329 / NBRC 3317 / NCIB 8153</strain>
    </source>
</reference>
<sequence length="170" mass="18468">MAYELPQLPYAYDALEPHIDAKTXEIHHSKHHNTYVTNLNAAVEGTEFADKDINDLIAMLDALPADKQTAVRNNGGGHANHTLFWEVIAPGGSNTPVGEVAKAIDAKFGSFDAFKEEFAKAATTRFGSGWAWLIVDGDSVAVTSTPNQDSPVMEGKTPVLGLDVWEHAYY</sequence>
<evidence type="ECO:0000250" key="1"/>
<evidence type="ECO:0000269" key="2">
    <source>
    </source>
</evidence>
<evidence type="ECO:0000269" key="3">
    <source>
    </source>
</evidence>
<evidence type="ECO:0000305" key="4"/>